<gene>
    <name evidence="1" type="primary">pyrH</name>
    <name type="ordered locus">IL0843</name>
</gene>
<name>PYRH_IDILO</name>
<keyword id="KW-0067">ATP-binding</keyword>
<keyword id="KW-0963">Cytoplasm</keyword>
<keyword id="KW-0418">Kinase</keyword>
<keyword id="KW-0547">Nucleotide-binding</keyword>
<keyword id="KW-0665">Pyrimidine biosynthesis</keyword>
<keyword id="KW-1185">Reference proteome</keyword>
<keyword id="KW-0808">Transferase</keyword>
<proteinExistence type="inferred from homology"/>
<sequence length="245" mass="26525">MMSTHPKPSYRRILLKLSGEALMGDEPFGIDAKVLDRMAQEIKELVELGVQVGLVIGGGNLFRGEGLAKAGMNRVVGDHMGMLATVMNGLAMRDALHRAFVNARLMSAIELTGVCDSYNWAEAISLLKSGRVVIFSAGTGNPFFTTDSAACLRGIEIEAEVVLKGTKVDGVYSDDPVSNPDATLYKHINYDDILEKQLKVMDLAAFTLARDHALPIRVFNMNKPGALRAVIMGEEEGTLISKNAE</sequence>
<dbReference type="EC" id="2.7.4.22" evidence="1"/>
<dbReference type="EMBL" id="AE017340">
    <property type="protein sequence ID" value="AAV81683.1"/>
    <property type="molecule type" value="Genomic_DNA"/>
</dbReference>
<dbReference type="SMR" id="Q5QXS2"/>
<dbReference type="STRING" id="283942.IL0843"/>
<dbReference type="KEGG" id="ilo:IL0843"/>
<dbReference type="eggNOG" id="COG0528">
    <property type="taxonomic scope" value="Bacteria"/>
</dbReference>
<dbReference type="HOGENOM" id="CLU_033861_0_0_6"/>
<dbReference type="UniPathway" id="UPA00159">
    <property type="reaction ID" value="UER00275"/>
</dbReference>
<dbReference type="Proteomes" id="UP000001171">
    <property type="component" value="Chromosome"/>
</dbReference>
<dbReference type="GO" id="GO:0005829">
    <property type="term" value="C:cytosol"/>
    <property type="evidence" value="ECO:0007669"/>
    <property type="project" value="TreeGrafter"/>
</dbReference>
<dbReference type="GO" id="GO:0005524">
    <property type="term" value="F:ATP binding"/>
    <property type="evidence" value="ECO:0007669"/>
    <property type="project" value="UniProtKB-KW"/>
</dbReference>
<dbReference type="GO" id="GO:0033862">
    <property type="term" value="F:UMP kinase activity"/>
    <property type="evidence" value="ECO:0007669"/>
    <property type="project" value="UniProtKB-EC"/>
</dbReference>
<dbReference type="GO" id="GO:0044210">
    <property type="term" value="P:'de novo' CTP biosynthetic process"/>
    <property type="evidence" value="ECO:0007669"/>
    <property type="project" value="UniProtKB-UniRule"/>
</dbReference>
<dbReference type="GO" id="GO:0006225">
    <property type="term" value="P:UDP biosynthetic process"/>
    <property type="evidence" value="ECO:0007669"/>
    <property type="project" value="TreeGrafter"/>
</dbReference>
<dbReference type="CDD" id="cd04254">
    <property type="entry name" value="AAK_UMPK-PyrH-Ec"/>
    <property type="match status" value="1"/>
</dbReference>
<dbReference type="FunFam" id="3.40.1160.10:FF:000001">
    <property type="entry name" value="Uridylate kinase"/>
    <property type="match status" value="1"/>
</dbReference>
<dbReference type="Gene3D" id="3.40.1160.10">
    <property type="entry name" value="Acetylglutamate kinase-like"/>
    <property type="match status" value="1"/>
</dbReference>
<dbReference type="HAMAP" id="MF_01220_B">
    <property type="entry name" value="PyrH_B"/>
    <property type="match status" value="1"/>
</dbReference>
<dbReference type="InterPro" id="IPR036393">
    <property type="entry name" value="AceGlu_kinase-like_sf"/>
</dbReference>
<dbReference type="InterPro" id="IPR001048">
    <property type="entry name" value="Asp/Glu/Uridylate_kinase"/>
</dbReference>
<dbReference type="InterPro" id="IPR011817">
    <property type="entry name" value="Uridylate_kinase"/>
</dbReference>
<dbReference type="InterPro" id="IPR015963">
    <property type="entry name" value="Uridylate_kinase_bac"/>
</dbReference>
<dbReference type="NCBIfam" id="TIGR02075">
    <property type="entry name" value="pyrH_bact"/>
    <property type="match status" value="1"/>
</dbReference>
<dbReference type="PANTHER" id="PTHR42833">
    <property type="entry name" value="URIDYLATE KINASE"/>
    <property type="match status" value="1"/>
</dbReference>
<dbReference type="PANTHER" id="PTHR42833:SF4">
    <property type="entry name" value="URIDYLATE KINASE PUMPKIN, CHLOROPLASTIC"/>
    <property type="match status" value="1"/>
</dbReference>
<dbReference type="Pfam" id="PF00696">
    <property type="entry name" value="AA_kinase"/>
    <property type="match status" value="1"/>
</dbReference>
<dbReference type="PIRSF" id="PIRSF005650">
    <property type="entry name" value="Uridylate_kin"/>
    <property type="match status" value="1"/>
</dbReference>
<dbReference type="SUPFAM" id="SSF53633">
    <property type="entry name" value="Carbamate kinase-like"/>
    <property type="match status" value="1"/>
</dbReference>
<reference key="1">
    <citation type="journal article" date="2004" name="Proc. Natl. Acad. Sci. U.S.A.">
        <title>Genome sequence of the deep-sea gamma-proteobacterium Idiomarina loihiensis reveals amino acid fermentation as a source of carbon and energy.</title>
        <authorList>
            <person name="Hou S."/>
            <person name="Saw J.H."/>
            <person name="Lee K.S."/>
            <person name="Freitas T.A."/>
            <person name="Belisle C."/>
            <person name="Kawarabayasi Y."/>
            <person name="Donachie S.P."/>
            <person name="Pikina A."/>
            <person name="Galperin M.Y."/>
            <person name="Koonin E.V."/>
            <person name="Makarova K.S."/>
            <person name="Omelchenko M.V."/>
            <person name="Sorokin A."/>
            <person name="Wolf Y.I."/>
            <person name="Li Q.X."/>
            <person name="Keum Y.S."/>
            <person name="Campbell S."/>
            <person name="Denery J."/>
            <person name="Aizawa S."/>
            <person name="Shibata S."/>
            <person name="Malahoff A."/>
            <person name="Alam M."/>
        </authorList>
    </citation>
    <scope>NUCLEOTIDE SEQUENCE [LARGE SCALE GENOMIC DNA]</scope>
    <source>
        <strain>ATCC BAA-735 / DSM 15497 / L2-TR</strain>
    </source>
</reference>
<organism>
    <name type="scientific">Idiomarina loihiensis (strain ATCC BAA-735 / DSM 15497 / L2-TR)</name>
    <dbReference type="NCBI Taxonomy" id="283942"/>
    <lineage>
        <taxon>Bacteria</taxon>
        <taxon>Pseudomonadati</taxon>
        <taxon>Pseudomonadota</taxon>
        <taxon>Gammaproteobacteria</taxon>
        <taxon>Alteromonadales</taxon>
        <taxon>Idiomarinaceae</taxon>
        <taxon>Idiomarina</taxon>
    </lineage>
</organism>
<accession>Q5QXS2</accession>
<feature type="chain" id="PRO_0000323866" description="Uridylate kinase">
    <location>
        <begin position="1"/>
        <end position="245"/>
    </location>
</feature>
<feature type="binding site" evidence="1">
    <location>
        <begin position="16"/>
        <end position="19"/>
    </location>
    <ligand>
        <name>ATP</name>
        <dbReference type="ChEBI" id="CHEBI:30616"/>
    </ligand>
</feature>
<feature type="binding site" evidence="1">
    <location>
        <position position="58"/>
    </location>
    <ligand>
        <name>UMP</name>
        <dbReference type="ChEBI" id="CHEBI:57865"/>
    </ligand>
</feature>
<feature type="binding site" evidence="1">
    <location>
        <position position="59"/>
    </location>
    <ligand>
        <name>ATP</name>
        <dbReference type="ChEBI" id="CHEBI:30616"/>
    </ligand>
</feature>
<feature type="binding site" evidence="1">
    <location>
        <position position="63"/>
    </location>
    <ligand>
        <name>ATP</name>
        <dbReference type="ChEBI" id="CHEBI:30616"/>
    </ligand>
</feature>
<feature type="binding site" evidence="1">
    <location>
        <position position="78"/>
    </location>
    <ligand>
        <name>UMP</name>
        <dbReference type="ChEBI" id="CHEBI:57865"/>
    </ligand>
</feature>
<feature type="binding site" evidence="1">
    <location>
        <begin position="139"/>
        <end position="146"/>
    </location>
    <ligand>
        <name>UMP</name>
        <dbReference type="ChEBI" id="CHEBI:57865"/>
    </ligand>
</feature>
<feature type="binding site" evidence="1">
    <location>
        <position position="166"/>
    </location>
    <ligand>
        <name>ATP</name>
        <dbReference type="ChEBI" id="CHEBI:30616"/>
    </ligand>
</feature>
<feature type="binding site" evidence="1">
    <location>
        <position position="172"/>
    </location>
    <ligand>
        <name>ATP</name>
        <dbReference type="ChEBI" id="CHEBI:30616"/>
    </ligand>
</feature>
<feature type="binding site" evidence="1">
    <location>
        <position position="175"/>
    </location>
    <ligand>
        <name>ATP</name>
        <dbReference type="ChEBI" id="CHEBI:30616"/>
    </ligand>
</feature>
<evidence type="ECO:0000255" key="1">
    <source>
        <dbReference type="HAMAP-Rule" id="MF_01220"/>
    </source>
</evidence>
<comment type="function">
    <text evidence="1">Catalyzes the reversible phosphorylation of UMP to UDP.</text>
</comment>
<comment type="catalytic activity">
    <reaction evidence="1">
        <text>UMP + ATP = UDP + ADP</text>
        <dbReference type="Rhea" id="RHEA:24400"/>
        <dbReference type="ChEBI" id="CHEBI:30616"/>
        <dbReference type="ChEBI" id="CHEBI:57865"/>
        <dbReference type="ChEBI" id="CHEBI:58223"/>
        <dbReference type="ChEBI" id="CHEBI:456216"/>
        <dbReference type="EC" id="2.7.4.22"/>
    </reaction>
</comment>
<comment type="activity regulation">
    <text evidence="1">Inhibited by UTP.</text>
</comment>
<comment type="pathway">
    <text evidence="1">Pyrimidine metabolism; CTP biosynthesis via de novo pathway; UDP from UMP (UMPK route): step 1/1.</text>
</comment>
<comment type="subunit">
    <text evidence="1">Homohexamer.</text>
</comment>
<comment type="subcellular location">
    <subcellularLocation>
        <location evidence="1">Cytoplasm</location>
    </subcellularLocation>
</comment>
<comment type="similarity">
    <text evidence="1">Belongs to the UMP kinase family.</text>
</comment>
<protein>
    <recommendedName>
        <fullName evidence="1">Uridylate kinase</fullName>
        <shortName evidence="1">UK</shortName>
        <ecNumber evidence="1">2.7.4.22</ecNumber>
    </recommendedName>
    <alternativeName>
        <fullName evidence="1">Uridine monophosphate kinase</fullName>
        <shortName evidence="1">UMP kinase</shortName>
        <shortName evidence="1">UMPK</shortName>
    </alternativeName>
</protein>